<name>MPTA1_METAR</name>
<accession>Q0W6F5</accession>
<keyword id="KW-0378">Hydrolase</keyword>
<keyword id="KW-0408">Iron</keyword>
<keyword id="KW-0479">Metal-binding</keyword>
<keyword id="KW-1185">Reference proteome</keyword>
<proteinExistence type="inferred from homology"/>
<dbReference type="EC" id="3.5.4.39" evidence="1"/>
<dbReference type="EMBL" id="AM114193">
    <property type="protein sequence ID" value="CAJ36038.1"/>
    <property type="molecule type" value="Genomic_DNA"/>
</dbReference>
<dbReference type="RefSeq" id="WP_012036470.1">
    <property type="nucleotide sequence ID" value="NC_009464.1"/>
</dbReference>
<dbReference type="SMR" id="Q0W6F5"/>
<dbReference type="STRING" id="351160.RCIX633"/>
<dbReference type="GeneID" id="5143946"/>
<dbReference type="KEGG" id="rci:RCIX633"/>
<dbReference type="PATRIC" id="fig|351160.9.peg.2198"/>
<dbReference type="eggNOG" id="arCOG04301">
    <property type="taxonomic scope" value="Archaea"/>
</dbReference>
<dbReference type="OrthoDB" id="53087at2157"/>
<dbReference type="UniPathway" id="UPA00065"/>
<dbReference type="Proteomes" id="UP000000663">
    <property type="component" value="Chromosome"/>
</dbReference>
<dbReference type="GO" id="GO:0003934">
    <property type="term" value="F:GTP cyclohydrolase I activity"/>
    <property type="evidence" value="ECO:0007669"/>
    <property type="project" value="InterPro"/>
</dbReference>
<dbReference type="GO" id="GO:0044682">
    <property type="term" value="F:GTP cyclohydrolase IV activity"/>
    <property type="evidence" value="ECO:0007669"/>
    <property type="project" value="UniProtKB-UniRule"/>
</dbReference>
<dbReference type="GO" id="GO:0005506">
    <property type="term" value="F:iron ion binding"/>
    <property type="evidence" value="ECO:0007669"/>
    <property type="project" value="UniProtKB-UniRule"/>
</dbReference>
<dbReference type="GO" id="GO:2001118">
    <property type="term" value="P:tetrahydromethanopterin biosynthetic process"/>
    <property type="evidence" value="ECO:0007669"/>
    <property type="project" value="UniProtKB-UniRule"/>
</dbReference>
<dbReference type="Gene3D" id="3.10.270.10">
    <property type="entry name" value="Urate Oxidase"/>
    <property type="match status" value="1"/>
</dbReference>
<dbReference type="HAMAP" id="MF_01527_A">
    <property type="entry name" value="GTP_cyclohydrol_A"/>
    <property type="match status" value="1"/>
</dbReference>
<dbReference type="InterPro" id="IPR003801">
    <property type="entry name" value="GTP_cyclohydrolase_FolE2/MptA"/>
</dbReference>
<dbReference type="InterPro" id="IPR022840">
    <property type="entry name" value="GTP_cyclohydrolase_MptA"/>
</dbReference>
<dbReference type="NCBIfam" id="TIGR00294">
    <property type="entry name" value="GTP cyclohydrolase MptA"/>
    <property type="match status" value="1"/>
</dbReference>
<dbReference type="PANTHER" id="PTHR36445">
    <property type="entry name" value="GTP CYCLOHYDROLASE MPTA"/>
    <property type="match status" value="1"/>
</dbReference>
<dbReference type="PANTHER" id="PTHR36445:SF1">
    <property type="entry name" value="GTP CYCLOHYDROLASE MPTA"/>
    <property type="match status" value="1"/>
</dbReference>
<dbReference type="Pfam" id="PF02649">
    <property type="entry name" value="GCHY-1"/>
    <property type="match status" value="1"/>
</dbReference>
<evidence type="ECO:0000255" key="1">
    <source>
        <dbReference type="HAMAP-Rule" id="MF_01527"/>
    </source>
</evidence>
<gene>
    <name evidence="1" type="primary">mptA1</name>
    <name type="ordered locus">UNCMA_21480</name>
    <name type="ORF">RCIX633</name>
</gene>
<comment type="function">
    <text evidence="1">Converts GTP to 7,8-dihydro-D-neopterin 2',3'-cyclic phosphate, the first intermediate in the biosynthesis of coenzyme methanopterin.</text>
</comment>
<comment type="catalytic activity">
    <reaction evidence="1">
        <text>GTP + H2O = 7,8-dihydroneopterin 2',3'-cyclic phosphate + formate + diphosphate + H(+)</text>
        <dbReference type="Rhea" id="RHEA:25860"/>
        <dbReference type="ChEBI" id="CHEBI:15377"/>
        <dbReference type="ChEBI" id="CHEBI:15378"/>
        <dbReference type="ChEBI" id="CHEBI:15740"/>
        <dbReference type="ChEBI" id="CHEBI:33019"/>
        <dbReference type="ChEBI" id="CHEBI:37565"/>
        <dbReference type="ChEBI" id="CHEBI:58854"/>
        <dbReference type="EC" id="3.5.4.39"/>
    </reaction>
</comment>
<comment type="cofactor">
    <cofactor evidence="1">
        <name>Fe(2+)</name>
        <dbReference type="ChEBI" id="CHEBI:29033"/>
    </cofactor>
    <text evidence="1">Binds 1 Fe(2+) ion per subunit.</text>
</comment>
<comment type="pathway">
    <text evidence="1">Cofactor biosynthesis; 5,6,7,8-tetrahydromethanopterin biosynthesis.</text>
</comment>
<comment type="subunit">
    <text evidence="1">Homodimer.</text>
</comment>
<comment type="similarity">
    <text evidence="1">Belongs to the GTP cyclohydrolase IV family.</text>
</comment>
<feature type="chain" id="PRO_0000289543" description="GTP cyclohydrolase MptA 1">
    <location>
        <begin position="1"/>
        <end position="315"/>
    </location>
</feature>
<feature type="site" description="May be catalytically important" evidence="1">
    <location>
        <position position="159"/>
    </location>
</feature>
<organism>
    <name type="scientific">Methanocella arvoryzae (strain DSM 22066 / NBRC 105507 / MRE50)</name>
    <dbReference type="NCBI Taxonomy" id="351160"/>
    <lineage>
        <taxon>Archaea</taxon>
        <taxon>Methanobacteriati</taxon>
        <taxon>Methanobacteriota</taxon>
        <taxon>Stenosarchaea group</taxon>
        <taxon>Methanomicrobia</taxon>
        <taxon>Methanocellales</taxon>
        <taxon>Methanocellaceae</taxon>
        <taxon>Methanocella</taxon>
    </lineage>
</organism>
<protein>
    <recommendedName>
        <fullName evidence="1">GTP cyclohydrolase MptA 1</fullName>
        <ecNumber evidence="1">3.5.4.39</ecNumber>
    </recommendedName>
    <alternativeName>
        <fullName evidence="1">GTP cyclohydrolase IV 1</fullName>
    </alternativeName>
</protein>
<reference key="1">
    <citation type="journal article" date="2006" name="Science">
        <title>Genome of rice cluster I archaea -- the key methane producers in the rice rhizosphere.</title>
        <authorList>
            <person name="Erkel C."/>
            <person name="Kube M."/>
            <person name="Reinhardt R."/>
            <person name="Liesack W."/>
        </authorList>
    </citation>
    <scope>NUCLEOTIDE SEQUENCE [LARGE SCALE GENOMIC DNA]</scope>
    <source>
        <strain>DSM 22066 / NBRC 105507 / MRE50</strain>
    </source>
</reference>
<sequence length="315" mass="35410">MKFVQLPDVQASNPDVMVGLTRVGVTEVKKMVEITRSDKRPIILIPTFDIFVDLPSYRKGANLSRNLEAIDRTLEEALNQPVYRIEDLCVDVAKRLLETHEYASNAEVRMHGEYMMKKKSPKTGLECQEVYDIYADAIVVRGGIIRKTIGAKVIAMTACPCAQEISKETAFKKLAALGVADNVIAEFLDDMPMPTHNQRGVGTIKIESGNDVKVSIEAIIDIIENSMSSQMYELLKREDERYVVHSAHKNPKFVEDCVRTMAKNLVRKFPSLPDDAVITIEQVNEESIHRHNAFAERMATFGELKKEMLSNGPVL</sequence>